<reference key="1">
    <citation type="submission" date="2007-11" db="EMBL/GenBank/DDBJ databases">
        <title>Complete sequence of Petroga mobilis SJ95.</title>
        <authorList>
            <consortium name="US DOE Joint Genome Institute"/>
            <person name="Copeland A."/>
            <person name="Lucas S."/>
            <person name="Lapidus A."/>
            <person name="Barry K."/>
            <person name="Glavina del Rio T."/>
            <person name="Dalin E."/>
            <person name="Tice H."/>
            <person name="Pitluck S."/>
            <person name="Meincke L."/>
            <person name="Brettin T."/>
            <person name="Bruce D."/>
            <person name="Detter J.C."/>
            <person name="Han C."/>
            <person name="Kuske C.R."/>
            <person name="Schmutz J."/>
            <person name="Larimer F."/>
            <person name="Land M."/>
            <person name="Hauser L."/>
            <person name="Kyrpides N."/>
            <person name="Mikhailova N."/>
            <person name="Noll K."/>
            <person name="Richardson P."/>
        </authorList>
    </citation>
    <scope>NUCLEOTIDE SEQUENCE [LARGE SCALE GENOMIC DNA]</scope>
    <source>
        <strain>DSM 10674 / SJ95</strain>
    </source>
</reference>
<gene>
    <name evidence="1" type="primary">purL</name>
    <name type="ordered locus">Pmob_1959</name>
</gene>
<comment type="function">
    <text evidence="1">Part of the phosphoribosylformylglycinamidine synthase complex involved in the purines biosynthetic pathway. Catalyzes the ATP-dependent conversion of formylglycinamide ribonucleotide (FGAR) and glutamine to yield formylglycinamidine ribonucleotide (FGAM) and glutamate. The FGAM synthase complex is composed of three subunits. PurQ produces an ammonia molecule by converting glutamine to glutamate. PurL transfers the ammonia molecule to FGAR to form FGAM in an ATP-dependent manner. PurS interacts with PurQ and PurL and is thought to assist in the transfer of the ammonia molecule from PurQ to PurL.</text>
</comment>
<comment type="catalytic activity">
    <reaction evidence="1">
        <text>N(2)-formyl-N(1)-(5-phospho-beta-D-ribosyl)glycinamide + L-glutamine + ATP + H2O = 2-formamido-N(1)-(5-O-phospho-beta-D-ribosyl)acetamidine + L-glutamate + ADP + phosphate + H(+)</text>
        <dbReference type="Rhea" id="RHEA:17129"/>
        <dbReference type="ChEBI" id="CHEBI:15377"/>
        <dbReference type="ChEBI" id="CHEBI:15378"/>
        <dbReference type="ChEBI" id="CHEBI:29985"/>
        <dbReference type="ChEBI" id="CHEBI:30616"/>
        <dbReference type="ChEBI" id="CHEBI:43474"/>
        <dbReference type="ChEBI" id="CHEBI:58359"/>
        <dbReference type="ChEBI" id="CHEBI:147286"/>
        <dbReference type="ChEBI" id="CHEBI:147287"/>
        <dbReference type="ChEBI" id="CHEBI:456216"/>
        <dbReference type="EC" id="6.3.5.3"/>
    </reaction>
</comment>
<comment type="pathway">
    <text evidence="1">Purine metabolism; IMP biosynthesis via de novo pathway; 5-amino-1-(5-phospho-D-ribosyl)imidazole from N(2)-formyl-N(1)-(5-phospho-D-ribosyl)glycinamide: step 1/2.</text>
</comment>
<comment type="subunit">
    <text evidence="1">Monomer. Part of the FGAM synthase complex composed of 1 PurL, 1 PurQ and 2 PurS subunits.</text>
</comment>
<comment type="subcellular location">
    <subcellularLocation>
        <location evidence="1">Cytoplasm</location>
    </subcellularLocation>
</comment>
<comment type="similarity">
    <text evidence="1">Belongs to the FGAMS family.</text>
</comment>
<sequence>MQNQLTIKEIALELGISREEFDLIEEKLGRIPNEFETYLFSAQWSEHCGYKHSKHYLKKINESYESENAGYVQIGGKAVVFKVESHNHPSAVEPYQGAATGIGGIVRDILAMGARPIALLDSLKFGNVFDPKVKNIFEGVVSGISDYGNSIGVPTVGGETSFNEIYSTNPLINVMCVGVANKNHLASSHADGPDKLLVYVGSKTGRDGIHGASFASKKLSGKDDRPSVQVGDPFTEKNLIEATLEILKIKGVRACQDMGAAGVLSSTSEMAYKGGVGCELYLDNIPKRQEDIEPWEIMLSESQERMLFLVNPGTEKKVEAICNKYLIDFAVIGKTISTPHYVVKENSEGKVLADLPIDILVNAPEYYRNNTIPSTYILNKAKKYPKTKIKDIDKILKILLSNHNISSKKWIYQQYDYKVETNTIFIPEQADSAVLWLKKTQKAIAVTIDSNELYTYLDPFEGTKNVVYEAARNLISVGAKPLAITDNLNFGDPDDPEVSWQFEKSIEGLIEASKELSTPVVSGNVSFYNSYHETSIFPTPVIGMIGEIKDIKKIVNLKFKDCGDVVYLIGKTDINVDKIGGSFYLKVLEGFVGGEIDFVNPMYERYLQNFILDLIDKGILKSVHDVSKGGLLTALAVSCILSNRGFKGILDASIEELFGENQGRFIVSVRSKDSRIFEDIAKSSNINVKKLGEIKSSDDGIDICSAYFDLKELKSIYFDSISKSVEE</sequence>
<name>PURL_PETMO</name>
<feature type="chain" id="PRO_1000134904" description="Phosphoribosylformylglycinamidine synthase subunit PurL">
    <location>
        <begin position="1"/>
        <end position="727"/>
    </location>
</feature>
<feature type="active site" evidence="1">
    <location>
        <position position="47"/>
    </location>
</feature>
<feature type="active site" description="Proton acceptor" evidence="1">
    <location>
        <position position="86"/>
    </location>
</feature>
<feature type="binding site" evidence="1">
    <location>
        <position position="50"/>
    </location>
    <ligand>
        <name>ATP</name>
        <dbReference type="ChEBI" id="CHEBI:30616"/>
    </ligand>
</feature>
<feature type="binding site" evidence="1">
    <location>
        <position position="82"/>
    </location>
    <ligand>
        <name>ATP</name>
        <dbReference type="ChEBI" id="CHEBI:30616"/>
    </ligand>
</feature>
<feature type="binding site" evidence="1">
    <location>
        <position position="84"/>
    </location>
    <ligand>
        <name>Mg(2+)</name>
        <dbReference type="ChEBI" id="CHEBI:18420"/>
        <label>1</label>
    </ligand>
</feature>
<feature type="binding site" evidence="1">
    <location>
        <begin position="85"/>
        <end position="88"/>
    </location>
    <ligand>
        <name>substrate</name>
    </ligand>
</feature>
<feature type="binding site" evidence="1">
    <location>
        <position position="107"/>
    </location>
    <ligand>
        <name>substrate</name>
    </ligand>
</feature>
<feature type="binding site" evidence="1">
    <location>
        <position position="108"/>
    </location>
    <ligand>
        <name>Mg(2+)</name>
        <dbReference type="ChEBI" id="CHEBI:18420"/>
        <label>2</label>
    </ligand>
</feature>
<feature type="binding site" evidence="1">
    <location>
        <position position="229"/>
    </location>
    <ligand>
        <name>substrate</name>
    </ligand>
</feature>
<feature type="binding site" evidence="1">
    <location>
        <position position="257"/>
    </location>
    <ligand>
        <name>Mg(2+)</name>
        <dbReference type="ChEBI" id="CHEBI:18420"/>
        <label>2</label>
    </ligand>
</feature>
<feature type="binding site" evidence="1">
    <location>
        <begin position="301"/>
        <end position="303"/>
    </location>
    <ligand>
        <name>substrate</name>
    </ligand>
</feature>
<feature type="binding site" evidence="1">
    <location>
        <position position="486"/>
    </location>
    <ligand>
        <name>ATP</name>
        <dbReference type="ChEBI" id="CHEBI:30616"/>
    </ligand>
</feature>
<feature type="binding site" evidence="1">
    <location>
        <position position="523"/>
    </location>
    <ligand>
        <name>ATP</name>
        <dbReference type="ChEBI" id="CHEBI:30616"/>
    </ligand>
</feature>
<feature type="binding site" evidence="1">
    <location>
        <position position="524"/>
    </location>
    <ligand>
        <name>Mg(2+)</name>
        <dbReference type="ChEBI" id="CHEBI:18420"/>
        <label>1</label>
    </ligand>
</feature>
<feature type="binding site" evidence="1">
    <location>
        <position position="526"/>
    </location>
    <ligand>
        <name>substrate</name>
    </ligand>
</feature>
<organism>
    <name type="scientific">Petrotoga mobilis (strain DSM 10674 / SJ95)</name>
    <dbReference type="NCBI Taxonomy" id="403833"/>
    <lineage>
        <taxon>Bacteria</taxon>
        <taxon>Thermotogati</taxon>
        <taxon>Thermotogota</taxon>
        <taxon>Thermotogae</taxon>
        <taxon>Petrotogales</taxon>
        <taxon>Petrotogaceae</taxon>
        <taxon>Petrotoga</taxon>
    </lineage>
</organism>
<proteinExistence type="inferred from homology"/>
<protein>
    <recommendedName>
        <fullName evidence="1">Phosphoribosylformylglycinamidine synthase subunit PurL</fullName>
        <shortName evidence="1">FGAM synthase</shortName>
        <ecNumber evidence="1">6.3.5.3</ecNumber>
    </recommendedName>
    <alternativeName>
        <fullName evidence="1">Formylglycinamide ribonucleotide amidotransferase subunit II</fullName>
        <shortName evidence="1">FGAR amidotransferase II</shortName>
        <shortName evidence="1">FGAR-AT II</shortName>
    </alternativeName>
    <alternativeName>
        <fullName evidence="1">Glutamine amidotransferase PurL</fullName>
    </alternativeName>
    <alternativeName>
        <fullName evidence="1">Phosphoribosylformylglycinamidine synthase subunit II</fullName>
    </alternativeName>
</protein>
<accession>A9BIH4</accession>
<keyword id="KW-0067">ATP-binding</keyword>
<keyword id="KW-0963">Cytoplasm</keyword>
<keyword id="KW-0436">Ligase</keyword>
<keyword id="KW-0460">Magnesium</keyword>
<keyword id="KW-0479">Metal-binding</keyword>
<keyword id="KW-0547">Nucleotide-binding</keyword>
<keyword id="KW-0658">Purine biosynthesis</keyword>
<evidence type="ECO:0000255" key="1">
    <source>
        <dbReference type="HAMAP-Rule" id="MF_00420"/>
    </source>
</evidence>
<dbReference type="EC" id="6.3.5.3" evidence="1"/>
<dbReference type="EMBL" id="CP000879">
    <property type="protein sequence ID" value="ABX32646.1"/>
    <property type="molecule type" value="Genomic_DNA"/>
</dbReference>
<dbReference type="RefSeq" id="WP_012209742.1">
    <property type="nucleotide sequence ID" value="NC_010003.1"/>
</dbReference>
<dbReference type="SMR" id="A9BIH4"/>
<dbReference type="STRING" id="403833.Pmob_1959"/>
<dbReference type="KEGG" id="pmo:Pmob_1959"/>
<dbReference type="eggNOG" id="COG0046">
    <property type="taxonomic scope" value="Bacteria"/>
</dbReference>
<dbReference type="HOGENOM" id="CLU_003100_0_1_0"/>
<dbReference type="OrthoDB" id="9804441at2"/>
<dbReference type="UniPathway" id="UPA00074">
    <property type="reaction ID" value="UER00128"/>
</dbReference>
<dbReference type="Proteomes" id="UP000000789">
    <property type="component" value="Chromosome"/>
</dbReference>
<dbReference type="GO" id="GO:0005737">
    <property type="term" value="C:cytoplasm"/>
    <property type="evidence" value="ECO:0007669"/>
    <property type="project" value="UniProtKB-SubCell"/>
</dbReference>
<dbReference type="GO" id="GO:0005524">
    <property type="term" value="F:ATP binding"/>
    <property type="evidence" value="ECO:0007669"/>
    <property type="project" value="UniProtKB-UniRule"/>
</dbReference>
<dbReference type="GO" id="GO:0000287">
    <property type="term" value="F:magnesium ion binding"/>
    <property type="evidence" value="ECO:0007669"/>
    <property type="project" value="UniProtKB-UniRule"/>
</dbReference>
<dbReference type="GO" id="GO:0004642">
    <property type="term" value="F:phosphoribosylformylglycinamidine synthase activity"/>
    <property type="evidence" value="ECO:0007669"/>
    <property type="project" value="UniProtKB-UniRule"/>
</dbReference>
<dbReference type="GO" id="GO:0006189">
    <property type="term" value="P:'de novo' IMP biosynthetic process"/>
    <property type="evidence" value="ECO:0007669"/>
    <property type="project" value="UniProtKB-UniRule"/>
</dbReference>
<dbReference type="CDD" id="cd02203">
    <property type="entry name" value="PurL_repeat1"/>
    <property type="match status" value="1"/>
</dbReference>
<dbReference type="CDD" id="cd02204">
    <property type="entry name" value="PurL_repeat2"/>
    <property type="match status" value="1"/>
</dbReference>
<dbReference type="FunFam" id="3.30.1330.10:FF:000004">
    <property type="entry name" value="Phosphoribosylformylglycinamidine synthase subunit PurL"/>
    <property type="match status" value="1"/>
</dbReference>
<dbReference type="Gene3D" id="3.90.650.10">
    <property type="entry name" value="PurM-like C-terminal domain"/>
    <property type="match status" value="2"/>
</dbReference>
<dbReference type="Gene3D" id="3.30.1330.10">
    <property type="entry name" value="PurM-like, N-terminal domain"/>
    <property type="match status" value="2"/>
</dbReference>
<dbReference type="HAMAP" id="MF_00420">
    <property type="entry name" value="PurL_2"/>
    <property type="match status" value="1"/>
</dbReference>
<dbReference type="InterPro" id="IPR010074">
    <property type="entry name" value="PRibForGlyAmidine_synth_PurL"/>
</dbReference>
<dbReference type="InterPro" id="IPR041609">
    <property type="entry name" value="PurL_linker"/>
</dbReference>
<dbReference type="InterPro" id="IPR010918">
    <property type="entry name" value="PurM-like_C_dom"/>
</dbReference>
<dbReference type="InterPro" id="IPR036676">
    <property type="entry name" value="PurM-like_C_sf"/>
</dbReference>
<dbReference type="InterPro" id="IPR016188">
    <property type="entry name" value="PurM-like_N"/>
</dbReference>
<dbReference type="InterPro" id="IPR036921">
    <property type="entry name" value="PurM-like_N_sf"/>
</dbReference>
<dbReference type="NCBIfam" id="TIGR01736">
    <property type="entry name" value="FGAM_synth_II"/>
    <property type="match status" value="1"/>
</dbReference>
<dbReference type="NCBIfam" id="NF002290">
    <property type="entry name" value="PRK01213.1"/>
    <property type="match status" value="1"/>
</dbReference>
<dbReference type="PANTHER" id="PTHR43555">
    <property type="entry name" value="PHOSPHORIBOSYLFORMYLGLYCINAMIDINE SYNTHASE SUBUNIT PURL"/>
    <property type="match status" value="1"/>
</dbReference>
<dbReference type="PANTHER" id="PTHR43555:SF1">
    <property type="entry name" value="PHOSPHORIBOSYLFORMYLGLYCINAMIDINE SYNTHASE SUBUNIT PURL"/>
    <property type="match status" value="1"/>
</dbReference>
<dbReference type="Pfam" id="PF00586">
    <property type="entry name" value="AIRS"/>
    <property type="match status" value="2"/>
</dbReference>
<dbReference type="Pfam" id="PF02769">
    <property type="entry name" value="AIRS_C"/>
    <property type="match status" value="2"/>
</dbReference>
<dbReference type="Pfam" id="PF18072">
    <property type="entry name" value="FGAR-AT_linker"/>
    <property type="match status" value="1"/>
</dbReference>
<dbReference type="PIRSF" id="PIRSF001587">
    <property type="entry name" value="FGAM_synthase_II"/>
    <property type="match status" value="1"/>
</dbReference>
<dbReference type="SUPFAM" id="SSF56042">
    <property type="entry name" value="PurM C-terminal domain-like"/>
    <property type="match status" value="2"/>
</dbReference>
<dbReference type="SUPFAM" id="SSF55326">
    <property type="entry name" value="PurM N-terminal domain-like"/>
    <property type="match status" value="2"/>
</dbReference>